<feature type="chain" id="PRO_0000165731" description="Probable cytosol aminopeptidase">
    <location>
        <begin position="1"/>
        <end position="502"/>
    </location>
</feature>
<feature type="active site" evidence="1">
    <location>
        <position position="282"/>
    </location>
</feature>
<feature type="active site" evidence="1">
    <location>
        <position position="356"/>
    </location>
</feature>
<feature type="binding site" evidence="1">
    <location>
        <position position="270"/>
    </location>
    <ligand>
        <name>Mn(2+)</name>
        <dbReference type="ChEBI" id="CHEBI:29035"/>
        <label>2</label>
    </ligand>
</feature>
<feature type="binding site" evidence="1">
    <location>
        <position position="275"/>
    </location>
    <ligand>
        <name>Mn(2+)</name>
        <dbReference type="ChEBI" id="CHEBI:29035"/>
        <label>1</label>
    </ligand>
</feature>
<feature type="binding site" evidence="1">
    <location>
        <position position="275"/>
    </location>
    <ligand>
        <name>Mn(2+)</name>
        <dbReference type="ChEBI" id="CHEBI:29035"/>
        <label>2</label>
    </ligand>
</feature>
<feature type="binding site" evidence="1">
    <location>
        <position position="293"/>
    </location>
    <ligand>
        <name>Mn(2+)</name>
        <dbReference type="ChEBI" id="CHEBI:29035"/>
        <label>2</label>
    </ligand>
</feature>
<feature type="binding site" evidence="1">
    <location>
        <position position="352"/>
    </location>
    <ligand>
        <name>Mn(2+)</name>
        <dbReference type="ChEBI" id="CHEBI:29035"/>
        <label>1</label>
    </ligand>
</feature>
<feature type="binding site" evidence="1">
    <location>
        <position position="354"/>
    </location>
    <ligand>
        <name>Mn(2+)</name>
        <dbReference type="ChEBI" id="CHEBI:29035"/>
        <label>1</label>
    </ligand>
</feature>
<feature type="binding site" evidence="1">
    <location>
        <position position="354"/>
    </location>
    <ligand>
        <name>Mn(2+)</name>
        <dbReference type="ChEBI" id="CHEBI:29035"/>
        <label>2</label>
    </ligand>
</feature>
<gene>
    <name evidence="1" type="primary">pepA</name>
    <name type="ordered locus">BUsg_355</name>
</gene>
<reference key="1">
    <citation type="journal article" date="2002" name="Science">
        <title>50 million years of genomic stasis in endosymbiotic bacteria.</title>
        <authorList>
            <person name="Tamas I."/>
            <person name="Klasson L."/>
            <person name="Canbaeck B."/>
            <person name="Naeslund A.K."/>
            <person name="Eriksson A.-S."/>
            <person name="Wernegreen J.J."/>
            <person name="Sandstroem J.P."/>
            <person name="Moran N.A."/>
            <person name="Andersson S.G.E."/>
        </authorList>
    </citation>
    <scope>NUCLEOTIDE SEQUENCE [LARGE SCALE GENOMIC DNA]</scope>
    <source>
        <strain>Sg</strain>
    </source>
</reference>
<dbReference type="EC" id="3.4.11.1" evidence="1"/>
<dbReference type="EC" id="3.4.11.10" evidence="1"/>
<dbReference type="EMBL" id="AE013218">
    <property type="protein sequence ID" value="AAM67908.1"/>
    <property type="molecule type" value="Genomic_DNA"/>
</dbReference>
<dbReference type="RefSeq" id="WP_011053875.1">
    <property type="nucleotide sequence ID" value="NC_004061.1"/>
</dbReference>
<dbReference type="SMR" id="Q8K9I0"/>
<dbReference type="STRING" id="198804.BUsg_355"/>
<dbReference type="MEROPS" id="M17.003"/>
<dbReference type="GeneID" id="93003825"/>
<dbReference type="KEGG" id="bas:BUsg_355"/>
<dbReference type="eggNOG" id="COG0260">
    <property type="taxonomic scope" value="Bacteria"/>
</dbReference>
<dbReference type="HOGENOM" id="CLU_013734_0_0_6"/>
<dbReference type="Proteomes" id="UP000000416">
    <property type="component" value="Chromosome"/>
</dbReference>
<dbReference type="GO" id="GO:0005737">
    <property type="term" value="C:cytoplasm"/>
    <property type="evidence" value="ECO:0007669"/>
    <property type="project" value="UniProtKB-SubCell"/>
</dbReference>
<dbReference type="GO" id="GO:0030145">
    <property type="term" value="F:manganese ion binding"/>
    <property type="evidence" value="ECO:0007669"/>
    <property type="project" value="UniProtKB-UniRule"/>
</dbReference>
<dbReference type="GO" id="GO:0070006">
    <property type="term" value="F:metalloaminopeptidase activity"/>
    <property type="evidence" value="ECO:0007669"/>
    <property type="project" value="InterPro"/>
</dbReference>
<dbReference type="GO" id="GO:0006508">
    <property type="term" value="P:proteolysis"/>
    <property type="evidence" value="ECO:0007669"/>
    <property type="project" value="UniProtKB-KW"/>
</dbReference>
<dbReference type="CDD" id="cd00433">
    <property type="entry name" value="Peptidase_M17"/>
    <property type="match status" value="1"/>
</dbReference>
<dbReference type="FunFam" id="3.40.630.10:FF:000004">
    <property type="entry name" value="Probable cytosol aminopeptidase"/>
    <property type="match status" value="1"/>
</dbReference>
<dbReference type="Gene3D" id="3.40.220.10">
    <property type="entry name" value="Leucine Aminopeptidase, subunit E, domain 1"/>
    <property type="match status" value="1"/>
</dbReference>
<dbReference type="Gene3D" id="3.40.630.10">
    <property type="entry name" value="Zn peptidases"/>
    <property type="match status" value="1"/>
</dbReference>
<dbReference type="HAMAP" id="MF_00181">
    <property type="entry name" value="Cytosol_peptidase_M17"/>
    <property type="match status" value="1"/>
</dbReference>
<dbReference type="InterPro" id="IPR011356">
    <property type="entry name" value="Leucine_aapep/pepB"/>
</dbReference>
<dbReference type="InterPro" id="IPR043472">
    <property type="entry name" value="Macro_dom-like"/>
</dbReference>
<dbReference type="InterPro" id="IPR000819">
    <property type="entry name" value="Peptidase_M17_C"/>
</dbReference>
<dbReference type="InterPro" id="IPR023042">
    <property type="entry name" value="Peptidase_M17_leu_NH2_pept"/>
</dbReference>
<dbReference type="InterPro" id="IPR008283">
    <property type="entry name" value="Peptidase_M17_N"/>
</dbReference>
<dbReference type="NCBIfam" id="NF002074">
    <property type="entry name" value="PRK00913.1-4"/>
    <property type="match status" value="1"/>
</dbReference>
<dbReference type="PANTHER" id="PTHR11963:SF23">
    <property type="entry name" value="CYTOSOL AMINOPEPTIDASE"/>
    <property type="match status" value="1"/>
</dbReference>
<dbReference type="PANTHER" id="PTHR11963">
    <property type="entry name" value="LEUCINE AMINOPEPTIDASE-RELATED"/>
    <property type="match status" value="1"/>
</dbReference>
<dbReference type="Pfam" id="PF00883">
    <property type="entry name" value="Peptidase_M17"/>
    <property type="match status" value="1"/>
</dbReference>
<dbReference type="Pfam" id="PF02789">
    <property type="entry name" value="Peptidase_M17_N"/>
    <property type="match status" value="1"/>
</dbReference>
<dbReference type="PRINTS" id="PR00481">
    <property type="entry name" value="LAMNOPPTDASE"/>
</dbReference>
<dbReference type="SUPFAM" id="SSF52949">
    <property type="entry name" value="Macro domain-like"/>
    <property type="match status" value="1"/>
</dbReference>
<dbReference type="SUPFAM" id="SSF53187">
    <property type="entry name" value="Zn-dependent exopeptidases"/>
    <property type="match status" value="1"/>
</dbReference>
<dbReference type="PROSITE" id="PS00631">
    <property type="entry name" value="CYTOSOL_AP"/>
    <property type="match status" value="1"/>
</dbReference>
<name>AMPA_BUCAP</name>
<keyword id="KW-0031">Aminopeptidase</keyword>
<keyword id="KW-0963">Cytoplasm</keyword>
<keyword id="KW-0378">Hydrolase</keyword>
<keyword id="KW-0464">Manganese</keyword>
<keyword id="KW-0479">Metal-binding</keyword>
<keyword id="KW-0645">Protease</keyword>
<evidence type="ECO:0000255" key="1">
    <source>
        <dbReference type="HAMAP-Rule" id="MF_00181"/>
    </source>
</evidence>
<protein>
    <recommendedName>
        <fullName evidence="1">Probable cytosol aminopeptidase</fullName>
        <ecNumber evidence="1">3.4.11.1</ecNumber>
    </recommendedName>
    <alternativeName>
        <fullName evidence="1">Leucine aminopeptidase</fullName>
        <shortName evidence="1">LAP</shortName>
        <ecNumber evidence="1">3.4.11.10</ecNumber>
    </alternativeName>
    <alternativeName>
        <fullName evidence="1">Leucyl aminopeptidase</fullName>
    </alternativeName>
</protein>
<comment type="function">
    <text evidence="1">Presumably involved in the processing and regular turnover of intracellular proteins. Catalyzes the removal of unsubstituted N-terminal amino acids from various peptides.</text>
</comment>
<comment type="catalytic activity">
    <reaction evidence="1">
        <text>Release of an N-terminal amino acid, Xaa-|-Yaa-, in which Xaa is preferably Leu, but may be other amino acids including Pro although not Arg or Lys, and Yaa may be Pro. Amino acid amides and methyl esters are also readily hydrolyzed, but rates on arylamides are exceedingly low.</text>
        <dbReference type="EC" id="3.4.11.1"/>
    </reaction>
</comment>
<comment type="catalytic activity">
    <reaction evidence="1">
        <text>Release of an N-terminal amino acid, preferentially leucine, but not glutamic or aspartic acids.</text>
        <dbReference type="EC" id="3.4.11.10"/>
    </reaction>
</comment>
<comment type="cofactor">
    <cofactor evidence="1">
        <name>Mn(2+)</name>
        <dbReference type="ChEBI" id="CHEBI:29035"/>
    </cofactor>
    <text evidence="1">Binds 2 manganese ions per subunit.</text>
</comment>
<comment type="subcellular location">
    <subcellularLocation>
        <location evidence="1">Cytoplasm</location>
    </subcellularLocation>
</comment>
<comment type="similarity">
    <text evidence="1">Belongs to the peptidase M17 family.</text>
</comment>
<accession>Q8K9I0</accession>
<organism>
    <name type="scientific">Buchnera aphidicola subsp. Schizaphis graminum (strain Sg)</name>
    <dbReference type="NCBI Taxonomy" id="198804"/>
    <lineage>
        <taxon>Bacteria</taxon>
        <taxon>Pseudomonadati</taxon>
        <taxon>Pseudomonadota</taxon>
        <taxon>Gammaproteobacteria</taxon>
        <taxon>Enterobacterales</taxon>
        <taxon>Erwiniaceae</taxon>
        <taxon>Buchnera</taxon>
    </lineage>
</organism>
<sequence length="502" mass="56041">MKFFIKNVLLEEEKSDCIVIGVFEFCEFKYSNNYLNKSICSYINNFIKKGDMQGKVGETLLLYDVPNVVSKRILLVGCGKKNRLNRYYLDKIINKSMKILNKFSIKNIIFSLTEINIENYDIYWSIRTIVNSINKYLYKNFKINAFLKKEVYLNSISFHIIEKKDFHIANNSLKHALAINSGITAAKNLADLPPNICNPLYLSLQAQKLSEKYKDKIHVTSIDIKEMNNLGMNAYVAVGKGSKNKPYMSVIKYSGINNTEQEKIIVLIGKGLTFDSGGISIKPSNNMNEMKYDMCGAAAVYGTLIAAAKLNLPLTIIGILAGCENMPGGNAFRPGDIITTMSGKTVEILNTDAEGRLVLCDVLTYVQRFSPNIVIDIATLTGACVVALGNHFSGLFSNDDQLAYALEKSSRQTNDKIWRLPLSLEYEKELHSNFADLSNVGRGKAGAITASCFLAQFSKKYTWAHLDIAGTAWKSGKNHGATGRPVELLSQFLLNESNFLKF</sequence>
<proteinExistence type="inferred from homology"/>